<sequence>MALTHLQQLEAESIKIMREVAAEFENPVMLYSIGKDSSVLLHLARKAFYPAKIPFPLLHVDTNWKFSEMIEFRDRIAKEYGFELLVHKNPEGMEIGISPFEHGSGKHTDIMKTQGLKQALDKYGFDAAFGGARRDEEKSRAKERVYSFRDKHHRWDPKNQRPELWNTYNSQVNPGESIRVFPLSNWTELDIWQYIYQENIDMVPLYLAKERPVVDRDGTLIMVDDERMPLLEGEVPMMKSVRFRTLGCYPLTGAVESTASSLTEIIEEMLLSTSSEREGRVIDHDSAGSMEKKKREGYF</sequence>
<accession>Q3ILR0</accession>
<protein>
    <recommendedName>
        <fullName evidence="1">Sulfate adenylyltransferase subunit 2</fullName>
        <ecNumber evidence="1">2.7.7.4</ecNumber>
    </recommendedName>
    <alternativeName>
        <fullName evidence="1">ATP-sulfurylase small subunit</fullName>
    </alternativeName>
    <alternativeName>
        <fullName evidence="1">Sulfate adenylate transferase</fullName>
        <shortName evidence="1">SAT</shortName>
    </alternativeName>
</protein>
<comment type="function">
    <text evidence="1">With CysN forms the ATP sulfurylase (ATPS) that catalyzes the adenylation of sulfate producing adenosine 5'-phosphosulfate (APS) and diphosphate, the first enzymatic step in sulfur assimilation pathway. APS synthesis involves the formation of a high-energy phosphoric-sulfuric acid anhydride bond driven by GTP hydrolysis by CysN coupled to ATP hydrolysis by CysD.</text>
</comment>
<comment type="catalytic activity">
    <reaction evidence="1">
        <text>sulfate + ATP + H(+) = adenosine 5'-phosphosulfate + diphosphate</text>
        <dbReference type="Rhea" id="RHEA:18133"/>
        <dbReference type="ChEBI" id="CHEBI:15378"/>
        <dbReference type="ChEBI" id="CHEBI:16189"/>
        <dbReference type="ChEBI" id="CHEBI:30616"/>
        <dbReference type="ChEBI" id="CHEBI:33019"/>
        <dbReference type="ChEBI" id="CHEBI:58243"/>
        <dbReference type="EC" id="2.7.7.4"/>
    </reaction>
</comment>
<comment type="pathway">
    <text evidence="1">Sulfur metabolism; hydrogen sulfide biosynthesis; sulfite from sulfate: step 1/3.</text>
</comment>
<comment type="subunit">
    <text evidence="1">Heterodimer composed of CysD, the smaller subunit, and CysN.</text>
</comment>
<comment type="similarity">
    <text evidence="1">Belongs to the PAPS reductase family. CysD subfamily.</text>
</comment>
<organism>
    <name type="scientific">Pseudoalteromonas translucida (strain TAC 125)</name>
    <dbReference type="NCBI Taxonomy" id="326442"/>
    <lineage>
        <taxon>Bacteria</taxon>
        <taxon>Pseudomonadati</taxon>
        <taxon>Pseudomonadota</taxon>
        <taxon>Gammaproteobacteria</taxon>
        <taxon>Alteromonadales</taxon>
        <taxon>Pseudoalteromonadaceae</taxon>
        <taxon>Pseudoalteromonas</taxon>
    </lineage>
</organism>
<proteinExistence type="inferred from homology"/>
<feature type="chain" id="PRO_0000340215" description="Sulfate adenylyltransferase subunit 2">
    <location>
        <begin position="1"/>
        <end position="299"/>
    </location>
</feature>
<feature type="region of interest" description="Disordered" evidence="2">
    <location>
        <begin position="276"/>
        <end position="299"/>
    </location>
</feature>
<name>CYSD_PSET1</name>
<keyword id="KW-0067">ATP-binding</keyword>
<keyword id="KW-0547">Nucleotide-binding</keyword>
<keyword id="KW-0548">Nucleotidyltransferase</keyword>
<keyword id="KW-1185">Reference proteome</keyword>
<keyword id="KW-0808">Transferase</keyword>
<gene>
    <name evidence="1" type="primary">cysD</name>
    <name type="ordered locus">PSHAa0212</name>
</gene>
<reference key="1">
    <citation type="journal article" date="2005" name="Genome Res.">
        <title>Coping with cold: the genome of the versatile marine Antarctica bacterium Pseudoalteromonas haloplanktis TAC125.</title>
        <authorList>
            <person name="Medigue C."/>
            <person name="Krin E."/>
            <person name="Pascal G."/>
            <person name="Barbe V."/>
            <person name="Bernsel A."/>
            <person name="Bertin P.N."/>
            <person name="Cheung F."/>
            <person name="Cruveiller S."/>
            <person name="D'Amico S."/>
            <person name="Duilio A."/>
            <person name="Fang G."/>
            <person name="Feller G."/>
            <person name="Ho C."/>
            <person name="Mangenot S."/>
            <person name="Marino G."/>
            <person name="Nilsson J."/>
            <person name="Parrilli E."/>
            <person name="Rocha E.P.C."/>
            <person name="Rouy Z."/>
            <person name="Sekowska A."/>
            <person name="Tutino M.L."/>
            <person name="Vallenet D."/>
            <person name="von Heijne G."/>
            <person name="Danchin A."/>
        </authorList>
    </citation>
    <scope>NUCLEOTIDE SEQUENCE [LARGE SCALE GENOMIC DNA]</scope>
    <source>
        <strain>TAC 125</strain>
    </source>
</reference>
<evidence type="ECO:0000255" key="1">
    <source>
        <dbReference type="HAMAP-Rule" id="MF_00064"/>
    </source>
</evidence>
<evidence type="ECO:0000256" key="2">
    <source>
        <dbReference type="SAM" id="MobiDB-lite"/>
    </source>
</evidence>
<dbReference type="EC" id="2.7.7.4" evidence="1"/>
<dbReference type="EMBL" id="CR954246">
    <property type="protein sequence ID" value="CAI85315.1"/>
    <property type="molecule type" value="Genomic_DNA"/>
</dbReference>
<dbReference type="SMR" id="Q3ILR0"/>
<dbReference type="STRING" id="326442.PSHAa0212"/>
<dbReference type="KEGG" id="pha:PSHAa0212"/>
<dbReference type="PATRIC" id="fig|326442.8.peg.203"/>
<dbReference type="eggNOG" id="COG0175">
    <property type="taxonomic scope" value="Bacteria"/>
</dbReference>
<dbReference type="HOGENOM" id="CLU_043026_0_0_6"/>
<dbReference type="BioCyc" id="PHAL326442:PSHA_RS01040-MONOMER"/>
<dbReference type="UniPathway" id="UPA00140">
    <property type="reaction ID" value="UER00204"/>
</dbReference>
<dbReference type="Proteomes" id="UP000006843">
    <property type="component" value="Chromosome I"/>
</dbReference>
<dbReference type="GO" id="GO:0005524">
    <property type="term" value="F:ATP binding"/>
    <property type="evidence" value="ECO:0007669"/>
    <property type="project" value="UniProtKB-KW"/>
</dbReference>
<dbReference type="GO" id="GO:0004781">
    <property type="term" value="F:sulfate adenylyltransferase (ATP) activity"/>
    <property type="evidence" value="ECO:0007669"/>
    <property type="project" value="UniProtKB-UniRule"/>
</dbReference>
<dbReference type="GO" id="GO:0070814">
    <property type="term" value="P:hydrogen sulfide biosynthetic process"/>
    <property type="evidence" value="ECO:0007669"/>
    <property type="project" value="UniProtKB-UniRule"/>
</dbReference>
<dbReference type="GO" id="GO:0000103">
    <property type="term" value="P:sulfate assimilation"/>
    <property type="evidence" value="ECO:0007669"/>
    <property type="project" value="UniProtKB-UniRule"/>
</dbReference>
<dbReference type="CDD" id="cd23946">
    <property type="entry name" value="Sulfate_adenylyltransferase_2"/>
    <property type="match status" value="1"/>
</dbReference>
<dbReference type="FunFam" id="3.40.50.620:FF:000002">
    <property type="entry name" value="Sulfate adenylyltransferase subunit 2"/>
    <property type="match status" value="1"/>
</dbReference>
<dbReference type="Gene3D" id="3.40.50.620">
    <property type="entry name" value="HUPs"/>
    <property type="match status" value="1"/>
</dbReference>
<dbReference type="HAMAP" id="MF_00064">
    <property type="entry name" value="Sulf_adenylyltr_sub2"/>
    <property type="match status" value="1"/>
</dbReference>
<dbReference type="InterPro" id="IPR002500">
    <property type="entry name" value="PAPS_reduct_dom"/>
</dbReference>
<dbReference type="InterPro" id="IPR014729">
    <property type="entry name" value="Rossmann-like_a/b/a_fold"/>
</dbReference>
<dbReference type="InterPro" id="IPR011784">
    <property type="entry name" value="SO4_adenylTrfase_ssu"/>
</dbReference>
<dbReference type="InterPro" id="IPR050128">
    <property type="entry name" value="Sulfate_adenylyltrnsfr_sub2"/>
</dbReference>
<dbReference type="NCBIfam" id="TIGR02039">
    <property type="entry name" value="CysD"/>
    <property type="match status" value="1"/>
</dbReference>
<dbReference type="NCBIfam" id="NF003587">
    <property type="entry name" value="PRK05253.1"/>
    <property type="match status" value="1"/>
</dbReference>
<dbReference type="NCBIfam" id="NF009214">
    <property type="entry name" value="PRK12563.1"/>
    <property type="match status" value="1"/>
</dbReference>
<dbReference type="PANTHER" id="PTHR43196">
    <property type="entry name" value="SULFATE ADENYLYLTRANSFERASE SUBUNIT 2"/>
    <property type="match status" value="1"/>
</dbReference>
<dbReference type="PANTHER" id="PTHR43196:SF1">
    <property type="entry name" value="SULFATE ADENYLYLTRANSFERASE SUBUNIT 2"/>
    <property type="match status" value="1"/>
</dbReference>
<dbReference type="Pfam" id="PF01507">
    <property type="entry name" value="PAPS_reduct"/>
    <property type="match status" value="1"/>
</dbReference>
<dbReference type="PIRSF" id="PIRSF002936">
    <property type="entry name" value="CysDAde_trans"/>
    <property type="match status" value="1"/>
</dbReference>
<dbReference type="SUPFAM" id="SSF52402">
    <property type="entry name" value="Adenine nucleotide alpha hydrolases-like"/>
    <property type="match status" value="1"/>
</dbReference>